<protein>
    <recommendedName>
        <fullName>General odorant-binding protein 1</fullName>
        <shortName>GOBP 1</shortName>
    </recommendedName>
</protein>
<feature type="signal peptide" evidence="2">
    <location>
        <begin position="1"/>
        <end position="22"/>
    </location>
</feature>
<feature type="chain" id="PRO_0000012564" description="General odorant-binding protein 1">
    <location>
        <begin position="23"/>
        <end position="167"/>
    </location>
</feature>
<feature type="disulfide bond" evidence="1">
    <location>
        <begin position="41"/>
        <end position="76"/>
    </location>
</feature>
<feature type="disulfide bond" evidence="1">
    <location>
        <begin position="72"/>
        <end position="130"/>
    </location>
</feature>
<feature type="disulfide bond" evidence="1">
    <location>
        <begin position="119"/>
        <end position="139"/>
    </location>
</feature>
<keyword id="KW-1015">Disulfide bond</keyword>
<keyword id="KW-0552">Olfaction</keyword>
<keyword id="KW-0716">Sensory transduction</keyword>
<keyword id="KW-0732">Signal</keyword>
<keyword id="KW-0813">Transport</keyword>
<sequence>MAHTLQTVVLLLGTSILHPILADVNVMKDVTLGFGQALEKCREESQLTEEKMEEFFHFWSEDFKFEHRELGCAILCMSRHFNLLTDSSRMHHENTDKFIKSFPNNEVLSKHMVNLIHSCEQQHDADLDHCWRILRVAECFKRSCQEAGVAPSMELLMAEFIMESEIN</sequence>
<evidence type="ECO:0000250" key="1"/>
<evidence type="ECO:0000255" key="2"/>
<evidence type="ECO:0000305" key="3"/>
<accession>P87508</accession>
<dbReference type="EMBL" id="Y10970">
    <property type="protein sequence ID" value="CAA71866.1"/>
    <property type="molecule type" value="mRNA"/>
</dbReference>
<dbReference type="SMR" id="P87508"/>
<dbReference type="GO" id="GO:0005549">
    <property type="term" value="F:odorant binding"/>
    <property type="evidence" value="ECO:0007669"/>
    <property type="project" value="InterPro"/>
</dbReference>
<dbReference type="GO" id="GO:0007608">
    <property type="term" value="P:sensory perception of smell"/>
    <property type="evidence" value="ECO:0007669"/>
    <property type="project" value="UniProtKB-KW"/>
</dbReference>
<dbReference type="CDD" id="cd23992">
    <property type="entry name" value="PBP_GOBP"/>
    <property type="match status" value="1"/>
</dbReference>
<dbReference type="Gene3D" id="1.10.238.20">
    <property type="entry name" value="Pheromone/general odorant binding protein domain"/>
    <property type="match status" value="1"/>
</dbReference>
<dbReference type="InterPro" id="IPR006072">
    <property type="entry name" value="Odorant/phero-bd_Lep"/>
</dbReference>
<dbReference type="InterPro" id="IPR006170">
    <property type="entry name" value="PBP/GOBP"/>
</dbReference>
<dbReference type="InterPro" id="IPR036728">
    <property type="entry name" value="PBP_GOBP_sf"/>
</dbReference>
<dbReference type="Pfam" id="PF01395">
    <property type="entry name" value="PBP_GOBP"/>
    <property type="match status" value="1"/>
</dbReference>
<dbReference type="PIRSF" id="PIRSF015604">
    <property type="entry name" value="Odorant/phero_bd"/>
    <property type="match status" value="1"/>
</dbReference>
<dbReference type="PRINTS" id="PR00484">
    <property type="entry name" value="PBPGOBP"/>
</dbReference>
<dbReference type="SMART" id="SM00708">
    <property type="entry name" value="PhBP"/>
    <property type="match status" value="1"/>
</dbReference>
<dbReference type="SUPFAM" id="SSF47565">
    <property type="entry name" value="Insect pheromone/odorant-binding proteins"/>
    <property type="match status" value="1"/>
</dbReference>
<proteinExistence type="evidence at transcript level"/>
<name>OBP1_ANTPE</name>
<reference key="1">
    <citation type="journal article" date="1997" name="Invertebr. Neurosci.">
        <title>Elements of the olfactory signaling pathways in insect antennae.</title>
        <authorList>
            <person name="Krieger J."/>
            <person name="Mameli M."/>
            <person name="Breer H."/>
        </authorList>
    </citation>
    <scope>NUCLEOTIDE SEQUENCE [MRNA]</scope>
    <source>
        <tissue>Antenna</tissue>
    </source>
</reference>
<organism>
    <name type="scientific">Antheraea pernyi</name>
    <name type="common">Chinese oak silk moth</name>
    <name type="synonym">Bombyx pernyi</name>
    <dbReference type="NCBI Taxonomy" id="7119"/>
    <lineage>
        <taxon>Eukaryota</taxon>
        <taxon>Metazoa</taxon>
        <taxon>Ecdysozoa</taxon>
        <taxon>Arthropoda</taxon>
        <taxon>Hexapoda</taxon>
        <taxon>Insecta</taxon>
        <taxon>Pterygota</taxon>
        <taxon>Neoptera</taxon>
        <taxon>Endopterygota</taxon>
        <taxon>Lepidoptera</taxon>
        <taxon>Glossata</taxon>
        <taxon>Ditrysia</taxon>
        <taxon>Bombycoidea</taxon>
        <taxon>Saturniidae</taxon>
        <taxon>Saturniinae</taxon>
        <taxon>Saturniini</taxon>
        <taxon>Antheraea</taxon>
    </lineage>
</organism>
<comment type="function">
    <text>Present in the aqueous fluid surrounding olfactory sensory dendrites and are thought to aid in the capture and transport of hydrophobic odorants into and through this fluid.</text>
</comment>
<comment type="tissue specificity">
    <text>Antenna.</text>
</comment>
<comment type="similarity">
    <text evidence="3">Belongs to the PBP/GOBP family.</text>
</comment>